<organism>
    <name type="scientific">Saccharomyces cerevisiae (strain AWRI1631)</name>
    <name type="common">Baker's yeast</name>
    <dbReference type="NCBI Taxonomy" id="545124"/>
    <lineage>
        <taxon>Eukaryota</taxon>
        <taxon>Fungi</taxon>
        <taxon>Dikarya</taxon>
        <taxon>Ascomycota</taxon>
        <taxon>Saccharomycotina</taxon>
        <taxon>Saccharomycetes</taxon>
        <taxon>Saccharomycetales</taxon>
        <taxon>Saccharomycetaceae</taxon>
        <taxon>Saccharomyces</taxon>
    </lineage>
</organism>
<keyword id="KW-0963">Cytoplasm</keyword>
<keyword id="KW-0378">Hydrolase</keyword>
<keyword id="KW-0539">Nucleus</keyword>
<proteinExistence type="inferred from homology"/>
<accession>B5VK90</accession>
<protein>
    <recommendedName>
        <fullName>6-phosphogluconolactonase 3</fullName>
        <shortName>6PGL</shortName>
        <ecNumber>3.1.1.31</ecNumber>
    </recommendedName>
</protein>
<name>SOL3_YEAS6</name>
<comment type="function">
    <text evidence="1">Hydrolysis of 6-phosphogluconolactone to 6-phosphogluconate.</text>
</comment>
<comment type="catalytic activity">
    <reaction>
        <text>6-phospho-D-glucono-1,5-lactone + H2O = 6-phospho-D-gluconate + H(+)</text>
        <dbReference type="Rhea" id="RHEA:12556"/>
        <dbReference type="ChEBI" id="CHEBI:15377"/>
        <dbReference type="ChEBI" id="CHEBI:15378"/>
        <dbReference type="ChEBI" id="CHEBI:57955"/>
        <dbReference type="ChEBI" id="CHEBI:58759"/>
        <dbReference type="EC" id="3.1.1.31"/>
    </reaction>
</comment>
<comment type="pathway">
    <text>Carbohydrate degradation; pentose phosphate pathway; D-ribulose 5-phosphate from D-glucose 6-phosphate (oxidative stage): step 2/3.</text>
</comment>
<comment type="subcellular location">
    <subcellularLocation>
        <location evidence="1">Cytoplasm</location>
    </subcellularLocation>
    <subcellularLocation>
        <location evidence="1">Nucleus</location>
    </subcellularLocation>
</comment>
<comment type="similarity">
    <text evidence="2">Belongs to the glucosamine/galactosamine-6-phosphate isomerase family. 6-phosphogluconolactonase subfamily.</text>
</comment>
<evidence type="ECO:0000250" key="1"/>
<evidence type="ECO:0000305" key="2"/>
<sequence length="249" mass="27784">MVTVGVFSERASLTHQLGEFIVKKQDEALQKKSDFKVSVSGGSLIDALYESLVADESLSSRVQWSKWQIYFSDERIVPLTDADSNYGAFKRAVLDKLPSTSQPNVYPMDESLIGSDAESNNKIAAEYERIVPQVLDLVLLGCGPDGHTCSLFPGETHRYLLNETTKRVAWCHDSPKPPSDRITFTLPVLKDAKALCFVAEGSSKQNIMHEIFDLKNDQLPTALVNKLFGEKTSWFVNEEAFGKVQTKTF</sequence>
<dbReference type="EC" id="3.1.1.31"/>
<dbReference type="EMBL" id="ABSV01001142">
    <property type="protein sequence ID" value="EDZ71654.1"/>
    <property type="molecule type" value="Genomic_DNA"/>
</dbReference>
<dbReference type="SMR" id="B5VK90"/>
<dbReference type="UniPathway" id="UPA00115">
    <property type="reaction ID" value="UER00409"/>
</dbReference>
<dbReference type="Proteomes" id="UP000008988">
    <property type="component" value="Unassembled WGS sequence"/>
</dbReference>
<dbReference type="GO" id="GO:0005737">
    <property type="term" value="C:cytoplasm"/>
    <property type="evidence" value="ECO:0007669"/>
    <property type="project" value="UniProtKB-SubCell"/>
</dbReference>
<dbReference type="GO" id="GO:0005634">
    <property type="term" value="C:nucleus"/>
    <property type="evidence" value="ECO:0007669"/>
    <property type="project" value="UniProtKB-SubCell"/>
</dbReference>
<dbReference type="GO" id="GO:0017057">
    <property type="term" value="F:6-phosphogluconolactonase activity"/>
    <property type="evidence" value="ECO:0007669"/>
    <property type="project" value="UniProtKB-EC"/>
</dbReference>
<dbReference type="GO" id="GO:0005975">
    <property type="term" value="P:carbohydrate metabolic process"/>
    <property type="evidence" value="ECO:0007669"/>
    <property type="project" value="InterPro"/>
</dbReference>
<dbReference type="GO" id="GO:0006098">
    <property type="term" value="P:pentose-phosphate shunt"/>
    <property type="evidence" value="ECO:0007669"/>
    <property type="project" value="UniProtKB-UniPathway"/>
</dbReference>
<dbReference type="CDD" id="cd01400">
    <property type="entry name" value="6PGL"/>
    <property type="match status" value="1"/>
</dbReference>
<dbReference type="FunFam" id="3.40.50.1360:FF:000005">
    <property type="entry name" value="6-phosphogluconolactonase"/>
    <property type="match status" value="1"/>
</dbReference>
<dbReference type="Gene3D" id="3.40.50.1360">
    <property type="match status" value="1"/>
</dbReference>
<dbReference type="InterPro" id="IPR005900">
    <property type="entry name" value="6-phosphogluconolactonase_DevB"/>
</dbReference>
<dbReference type="InterPro" id="IPR006148">
    <property type="entry name" value="Glc/Gal-6P_isomerase"/>
</dbReference>
<dbReference type="InterPro" id="IPR037171">
    <property type="entry name" value="NagB/RpiA_transferase-like"/>
</dbReference>
<dbReference type="InterPro" id="IPR039104">
    <property type="entry name" value="PGLS"/>
</dbReference>
<dbReference type="NCBIfam" id="TIGR01198">
    <property type="entry name" value="pgl"/>
    <property type="match status" value="1"/>
</dbReference>
<dbReference type="PANTHER" id="PTHR11054">
    <property type="entry name" value="6-PHOSPHOGLUCONOLACTONASE"/>
    <property type="match status" value="1"/>
</dbReference>
<dbReference type="PANTHER" id="PTHR11054:SF24">
    <property type="entry name" value="6-PHOSPHOGLUCONOLACTONASE 3-RELATED"/>
    <property type="match status" value="1"/>
</dbReference>
<dbReference type="Pfam" id="PF01182">
    <property type="entry name" value="Glucosamine_iso"/>
    <property type="match status" value="1"/>
</dbReference>
<dbReference type="SUPFAM" id="SSF100950">
    <property type="entry name" value="NagB/RpiA/CoA transferase-like"/>
    <property type="match status" value="1"/>
</dbReference>
<reference key="1">
    <citation type="journal article" date="2008" name="FEMS Yeast Res.">
        <title>Comparative genome analysis of a Saccharomyces cerevisiae wine strain.</title>
        <authorList>
            <person name="Borneman A.R."/>
            <person name="Forgan A.H."/>
            <person name="Pretorius I.S."/>
            <person name="Chambers P.J."/>
        </authorList>
    </citation>
    <scope>NUCLEOTIDE SEQUENCE [LARGE SCALE GENOMIC DNA]</scope>
    <source>
        <strain>AWRI1631</strain>
    </source>
</reference>
<feature type="chain" id="PRO_0000377635" description="6-phosphogluconolactonase 3">
    <location>
        <begin position="1"/>
        <end position="249"/>
    </location>
</feature>
<gene>
    <name type="primary">SOL3</name>
    <name type="ORF">AWRI1631_82140</name>
</gene>